<proteinExistence type="inferred from homology"/>
<evidence type="ECO:0000255" key="1">
    <source>
        <dbReference type="HAMAP-Rule" id="MF_00514"/>
    </source>
</evidence>
<evidence type="ECO:0000256" key="2">
    <source>
        <dbReference type="SAM" id="MobiDB-lite"/>
    </source>
</evidence>
<evidence type="ECO:0000305" key="3"/>
<reference key="1">
    <citation type="journal article" date="2010" name="PLoS ONE">
        <title>The complete genome sequence of Cupriavidus metallidurans strain CH34, a master survivalist in harsh and anthropogenic environments.</title>
        <authorList>
            <person name="Janssen P.J."/>
            <person name="Van Houdt R."/>
            <person name="Moors H."/>
            <person name="Monsieurs P."/>
            <person name="Morin N."/>
            <person name="Michaux A."/>
            <person name="Benotmane M.A."/>
            <person name="Leys N."/>
            <person name="Vallaeys T."/>
            <person name="Lapidus A."/>
            <person name="Monchy S."/>
            <person name="Medigue C."/>
            <person name="Taghavi S."/>
            <person name="McCorkle S."/>
            <person name="Dunn J."/>
            <person name="van der Lelie D."/>
            <person name="Mergeay M."/>
        </authorList>
    </citation>
    <scope>NUCLEOTIDE SEQUENCE [LARGE SCALE GENOMIC DNA]</scope>
    <source>
        <strain>ATCC 43123 / DSM 2839 / NBRC 102507 / CH34</strain>
    </source>
</reference>
<feature type="chain" id="PRO_0000258733" description="Large ribosomal subunit protein bL35">
    <location>
        <begin position="1"/>
        <end position="65"/>
    </location>
</feature>
<feature type="region of interest" description="Disordered" evidence="2">
    <location>
        <begin position="1"/>
        <end position="65"/>
    </location>
</feature>
<feature type="compositionally biased region" description="Basic residues" evidence="2">
    <location>
        <begin position="1"/>
        <end position="15"/>
    </location>
</feature>
<feature type="compositionally biased region" description="Basic residues" evidence="2">
    <location>
        <begin position="26"/>
        <end position="44"/>
    </location>
</feature>
<accession>Q1LP78</accession>
<comment type="similarity">
    <text evidence="1">Belongs to the bacterial ribosomal protein bL35 family.</text>
</comment>
<sequence>MPKMKTKKSASKRFTARPNGSFKRGQAFKRHILTKKTTKNKRQLRGTQDVHETNLKSVRAMMPYA</sequence>
<gene>
    <name evidence="1" type="primary">rpmI</name>
    <name type="ordered locus">Rmet_1162</name>
</gene>
<dbReference type="EMBL" id="CP000352">
    <property type="protein sequence ID" value="ABF08048.1"/>
    <property type="molecule type" value="Genomic_DNA"/>
</dbReference>
<dbReference type="RefSeq" id="WP_006575466.1">
    <property type="nucleotide sequence ID" value="NC_007973.1"/>
</dbReference>
<dbReference type="SMR" id="Q1LP78"/>
<dbReference type="STRING" id="266264.Rmet_1162"/>
<dbReference type="GeneID" id="98400631"/>
<dbReference type="KEGG" id="rme:Rmet_1162"/>
<dbReference type="eggNOG" id="COG0291">
    <property type="taxonomic scope" value="Bacteria"/>
</dbReference>
<dbReference type="HOGENOM" id="CLU_169643_1_0_4"/>
<dbReference type="Proteomes" id="UP000002429">
    <property type="component" value="Chromosome"/>
</dbReference>
<dbReference type="GO" id="GO:0022625">
    <property type="term" value="C:cytosolic large ribosomal subunit"/>
    <property type="evidence" value="ECO:0007669"/>
    <property type="project" value="TreeGrafter"/>
</dbReference>
<dbReference type="GO" id="GO:0003735">
    <property type="term" value="F:structural constituent of ribosome"/>
    <property type="evidence" value="ECO:0007669"/>
    <property type="project" value="InterPro"/>
</dbReference>
<dbReference type="GO" id="GO:0006412">
    <property type="term" value="P:translation"/>
    <property type="evidence" value="ECO:0007669"/>
    <property type="project" value="UniProtKB-UniRule"/>
</dbReference>
<dbReference type="FunFam" id="4.10.410.60:FF:000001">
    <property type="entry name" value="50S ribosomal protein L35"/>
    <property type="match status" value="1"/>
</dbReference>
<dbReference type="Gene3D" id="4.10.410.60">
    <property type="match status" value="1"/>
</dbReference>
<dbReference type="HAMAP" id="MF_00514">
    <property type="entry name" value="Ribosomal_bL35"/>
    <property type="match status" value="1"/>
</dbReference>
<dbReference type="InterPro" id="IPR001706">
    <property type="entry name" value="Ribosomal_bL35"/>
</dbReference>
<dbReference type="InterPro" id="IPR021137">
    <property type="entry name" value="Ribosomal_bL35-like"/>
</dbReference>
<dbReference type="InterPro" id="IPR018265">
    <property type="entry name" value="Ribosomal_bL35_CS"/>
</dbReference>
<dbReference type="InterPro" id="IPR037229">
    <property type="entry name" value="Ribosomal_bL35_sf"/>
</dbReference>
<dbReference type="NCBIfam" id="TIGR00001">
    <property type="entry name" value="rpmI_bact"/>
    <property type="match status" value="1"/>
</dbReference>
<dbReference type="PANTHER" id="PTHR33343">
    <property type="entry name" value="54S RIBOSOMAL PROTEIN BL35M"/>
    <property type="match status" value="1"/>
</dbReference>
<dbReference type="PANTHER" id="PTHR33343:SF1">
    <property type="entry name" value="LARGE RIBOSOMAL SUBUNIT PROTEIN BL35M"/>
    <property type="match status" value="1"/>
</dbReference>
<dbReference type="Pfam" id="PF01632">
    <property type="entry name" value="Ribosomal_L35p"/>
    <property type="match status" value="1"/>
</dbReference>
<dbReference type="PRINTS" id="PR00064">
    <property type="entry name" value="RIBOSOMALL35"/>
</dbReference>
<dbReference type="SUPFAM" id="SSF143034">
    <property type="entry name" value="L35p-like"/>
    <property type="match status" value="1"/>
</dbReference>
<dbReference type="PROSITE" id="PS00936">
    <property type="entry name" value="RIBOSOMAL_L35"/>
    <property type="match status" value="1"/>
</dbReference>
<protein>
    <recommendedName>
        <fullName evidence="1">Large ribosomal subunit protein bL35</fullName>
    </recommendedName>
    <alternativeName>
        <fullName evidence="3">50S ribosomal protein L35</fullName>
    </alternativeName>
</protein>
<keyword id="KW-1185">Reference proteome</keyword>
<keyword id="KW-0687">Ribonucleoprotein</keyword>
<keyword id="KW-0689">Ribosomal protein</keyword>
<organism>
    <name type="scientific">Cupriavidus metallidurans (strain ATCC 43123 / DSM 2839 / NBRC 102507 / CH34)</name>
    <name type="common">Ralstonia metallidurans</name>
    <dbReference type="NCBI Taxonomy" id="266264"/>
    <lineage>
        <taxon>Bacteria</taxon>
        <taxon>Pseudomonadati</taxon>
        <taxon>Pseudomonadota</taxon>
        <taxon>Betaproteobacteria</taxon>
        <taxon>Burkholderiales</taxon>
        <taxon>Burkholderiaceae</taxon>
        <taxon>Cupriavidus</taxon>
    </lineage>
</organism>
<name>RL35_CUPMC</name>